<keyword id="KW-0997">Cell inner membrane</keyword>
<keyword id="KW-1003">Cell membrane</keyword>
<keyword id="KW-0249">Electron transport</keyword>
<keyword id="KW-0472">Membrane</keyword>
<keyword id="KW-1278">Translocase</keyword>
<keyword id="KW-0812">Transmembrane</keyword>
<keyword id="KW-1133">Transmembrane helix</keyword>
<keyword id="KW-0813">Transport</keyword>
<proteinExistence type="inferred from homology"/>
<feature type="chain" id="PRO_1000014094" description="Ion-translocating oxidoreductase complex subunit E">
    <location>
        <begin position="1"/>
        <end position="223"/>
    </location>
</feature>
<feature type="transmembrane region" description="Helical" evidence="1">
    <location>
        <begin position="17"/>
        <end position="37"/>
    </location>
</feature>
<feature type="transmembrane region" description="Helical" evidence="1">
    <location>
        <begin position="40"/>
        <end position="60"/>
    </location>
</feature>
<feature type="transmembrane region" description="Helical" evidence="1">
    <location>
        <begin position="70"/>
        <end position="90"/>
    </location>
</feature>
<feature type="transmembrane region" description="Helical" evidence="1">
    <location>
        <begin position="94"/>
        <end position="114"/>
    </location>
</feature>
<feature type="transmembrane region" description="Helical" evidence="1">
    <location>
        <begin position="129"/>
        <end position="149"/>
    </location>
</feature>
<feature type="transmembrane region" description="Helical" evidence="1">
    <location>
        <begin position="182"/>
        <end position="202"/>
    </location>
</feature>
<protein>
    <recommendedName>
        <fullName evidence="1">Ion-translocating oxidoreductase complex subunit E</fullName>
        <ecNumber evidence="1">7.-.-.-</ecNumber>
    </recommendedName>
    <alternativeName>
        <fullName evidence="1">Rnf electron transport complex subunit E</fullName>
    </alternativeName>
</protein>
<gene>
    <name evidence="1" type="primary">rnfE</name>
    <name type="ordered locus">amb2618</name>
</gene>
<name>RNFE_PARM1</name>
<comment type="function">
    <text evidence="1">Part of a membrane-bound complex that couples electron transfer with translocation of ions across the membrane.</text>
</comment>
<comment type="subunit">
    <text evidence="1">The complex is composed of six subunits: RnfA, RnfB, RnfC, RnfD, RnfE and RnfG.</text>
</comment>
<comment type="subcellular location">
    <subcellularLocation>
        <location evidence="1">Cell inner membrane</location>
        <topology evidence="1">Multi-pass membrane protein</topology>
    </subcellularLocation>
</comment>
<comment type="similarity">
    <text evidence="1">Belongs to the NqrDE/RnfAE family.</text>
</comment>
<organism>
    <name type="scientific">Paramagnetospirillum magneticum (strain ATCC 700264 / AMB-1)</name>
    <name type="common">Magnetospirillum magneticum</name>
    <dbReference type="NCBI Taxonomy" id="342108"/>
    <lineage>
        <taxon>Bacteria</taxon>
        <taxon>Pseudomonadati</taxon>
        <taxon>Pseudomonadota</taxon>
        <taxon>Alphaproteobacteria</taxon>
        <taxon>Rhodospirillales</taxon>
        <taxon>Magnetospirillaceae</taxon>
        <taxon>Paramagnetospirillum</taxon>
    </lineage>
</organism>
<accession>Q2W403</accession>
<evidence type="ECO:0000255" key="1">
    <source>
        <dbReference type="HAMAP-Rule" id="MF_00478"/>
    </source>
</evidence>
<reference key="1">
    <citation type="journal article" date="2005" name="DNA Res.">
        <title>Complete genome sequence of the facultative anaerobic magnetotactic bacterium Magnetospirillum sp. strain AMB-1.</title>
        <authorList>
            <person name="Matsunaga T."/>
            <person name="Okamura Y."/>
            <person name="Fukuda Y."/>
            <person name="Wahyudi A.T."/>
            <person name="Murase Y."/>
            <person name="Takeyama H."/>
        </authorList>
    </citation>
    <scope>NUCLEOTIDE SEQUENCE [LARGE SCALE GENOMIC DNA]</scope>
    <source>
        <strain>ATCC 700264 / AMB-1</strain>
    </source>
</reference>
<dbReference type="EC" id="7.-.-.-" evidence="1"/>
<dbReference type="EMBL" id="AP007255">
    <property type="protein sequence ID" value="BAE51422.1"/>
    <property type="molecule type" value="Genomic_DNA"/>
</dbReference>
<dbReference type="RefSeq" id="WP_011384999.1">
    <property type="nucleotide sequence ID" value="NC_007626.1"/>
</dbReference>
<dbReference type="SMR" id="Q2W403"/>
<dbReference type="STRING" id="342108.amb2618"/>
<dbReference type="KEGG" id="mag:amb2618"/>
<dbReference type="HOGENOM" id="CLU_046659_1_1_5"/>
<dbReference type="OrthoDB" id="9782945at2"/>
<dbReference type="Proteomes" id="UP000007058">
    <property type="component" value="Chromosome"/>
</dbReference>
<dbReference type="GO" id="GO:0005886">
    <property type="term" value="C:plasma membrane"/>
    <property type="evidence" value="ECO:0007669"/>
    <property type="project" value="UniProtKB-SubCell"/>
</dbReference>
<dbReference type="GO" id="GO:0022900">
    <property type="term" value="P:electron transport chain"/>
    <property type="evidence" value="ECO:0007669"/>
    <property type="project" value="UniProtKB-UniRule"/>
</dbReference>
<dbReference type="HAMAP" id="MF_00478">
    <property type="entry name" value="RsxE_RnfE"/>
    <property type="match status" value="1"/>
</dbReference>
<dbReference type="InterPro" id="IPR003667">
    <property type="entry name" value="NqrDE/RnfAE"/>
</dbReference>
<dbReference type="InterPro" id="IPR010968">
    <property type="entry name" value="RnfE"/>
</dbReference>
<dbReference type="NCBIfam" id="NF009070">
    <property type="entry name" value="PRK12405.1"/>
    <property type="match status" value="1"/>
</dbReference>
<dbReference type="NCBIfam" id="TIGR01948">
    <property type="entry name" value="rnfE"/>
    <property type="match status" value="1"/>
</dbReference>
<dbReference type="PANTHER" id="PTHR30586">
    <property type="entry name" value="ELECTRON TRANSPORT COMPLEX PROTEIN RNFE"/>
    <property type="match status" value="1"/>
</dbReference>
<dbReference type="PANTHER" id="PTHR30586:SF0">
    <property type="entry name" value="ION-TRANSLOCATING OXIDOREDUCTASE COMPLEX SUBUNIT E"/>
    <property type="match status" value="1"/>
</dbReference>
<dbReference type="Pfam" id="PF02508">
    <property type="entry name" value="Rnf-Nqr"/>
    <property type="match status" value="1"/>
</dbReference>
<dbReference type="PIRSF" id="PIRSF006102">
    <property type="entry name" value="NQR_DE"/>
    <property type="match status" value="1"/>
</dbReference>
<sequence length="223" mass="23679">MSASYGRIIKDGLWENNGVLCMLLGMCPTMAMTGTATNGLGMGLATAAVMAASNLMVAMFRNYVTHEVRIPVYILIVAANVTFVDLGMNAWMHELYKVLGLFIPLIVSNCLPLARLEAFAAKEPVLPSFLDGLFMGLGFTLALTAIGAVREMIGQGTLFADAALLLGPWAKLLELRVMPADWGILVLILPPGGFLIAGLMVVAKRLVDLAGGKEIKMAGAHSV</sequence>